<evidence type="ECO:0000255" key="1">
    <source>
        <dbReference type="HAMAP-Rule" id="MF_00445"/>
    </source>
</evidence>
<gene>
    <name evidence="1" type="primary">nuoN</name>
    <name type="ordered locus">YPO2543</name>
    <name type="ordered locus">y1642</name>
    <name type="ordered locus">YP_2354</name>
</gene>
<sequence length="487" mass="52347">MTITPQQLIAMLPLLIVGLTVVVVMLSIAWRRDHFINATLTVIGLNLALLSLYFVGQVGPMDVTPLMRVDGYSMFYTGLVIIASLATSTFAYPWLVGYPDNREEFYLLVLIAALGGILLASANHLASLFLGIELLTLPLFGLIGYAYRQKRSLEASIKYMLLSAAASSFLLFGMALLYAESGSLSFVGLGQSLSDSMVHQPLILAGLGMMIVGLGFKLSLVPFQLWTPDVYQGAPAPVSTFLATASKIAIFAVVMRLFMYAPAADSEAVRLVLSIIAVASILFGNLMAISQTNIKRLLGYSSIAHLGYLLIALVAVQTHELALPLETIGVYLAGYLFSSLGAFGVVSLMSSPYKGPDAESLFSYRGLFWHKPILSAVMTVMMLSLAGIPMTLGFIGKFFVVAMGVSANLWWLTGAVVLGSAIGLYYYLRVTVSLFLSPPQSLVRDTPSNWALTAGGVVVLISAILVLVLGIYPQPLITLVQMAQPLM</sequence>
<reference key="1">
    <citation type="journal article" date="2001" name="Nature">
        <title>Genome sequence of Yersinia pestis, the causative agent of plague.</title>
        <authorList>
            <person name="Parkhill J."/>
            <person name="Wren B.W."/>
            <person name="Thomson N.R."/>
            <person name="Titball R.W."/>
            <person name="Holden M.T.G."/>
            <person name="Prentice M.B."/>
            <person name="Sebaihia M."/>
            <person name="James K.D."/>
            <person name="Churcher C.M."/>
            <person name="Mungall K.L."/>
            <person name="Baker S."/>
            <person name="Basham D."/>
            <person name="Bentley S.D."/>
            <person name="Brooks K."/>
            <person name="Cerdeno-Tarraga A.-M."/>
            <person name="Chillingworth T."/>
            <person name="Cronin A."/>
            <person name="Davies R.M."/>
            <person name="Davis P."/>
            <person name="Dougan G."/>
            <person name="Feltwell T."/>
            <person name="Hamlin N."/>
            <person name="Holroyd S."/>
            <person name="Jagels K."/>
            <person name="Karlyshev A.V."/>
            <person name="Leather S."/>
            <person name="Moule S."/>
            <person name="Oyston P.C.F."/>
            <person name="Quail M.A."/>
            <person name="Rutherford K.M."/>
            <person name="Simmonds M."/>
            <person name="Skelton J."/>
            <person name="Stevens K."/>
            <person name="Whitehead S."/>
            <person name="Barrell B.G."/>
        </authorList>
    </citation>
    <scope>NUCLEOTIDE SEQUENCE [LARGE SCALE GENOMIC DNA]</scope>
    <source>
        <strain>CO-92 / Biovar Orientalis</strain>
    </source>
</reference>
<reference key="2">
    <citation type="journal article" date="2004" name="DNA Res.">
        <title>Complete genome sequence of Yersinia pestis strain 91001, an isolate avirulent to humans.</title>
        <authorList>
            <person name="Song Y."/>
            <person name="Tong Z."/>
            <person name="Wang J."/>
            <person name="Wang L."/>
            <person name="Guo Z."/>
            <person name="Han Y."/>
            <person name="Zhang J."/>
            <person name="Pei D."/>
            <person name="Zhou D."/>
            <person name="Qin H."/>
            <person name="Pang X."/>
            <person name="Han Y."/>
            <person name="Zhai J."/>
            <person name="Li M."/>
            <person name="Cui B."/>
            <person name="Qi Z."/>
            <person name="Jin L."/>
            <person name="Dai R."/>
            <person name="Chen F."/>
            <person name="Li S."/>
            <person name="Ye C."/>
            <person name="Du Z."/>
            <person name="Lin W."/>
            <person name="Wang J."/>
            <person name="Yu J."/>
            <person name="Yang H."/>
            <person name="Wang J."/>
            <person name="Huang P."/>
            <person name="Yang R."/>
        </authorList>
    </citation>
    <scope>NUCLEOTIDE SEQUENCE [LARGE SCALE GENOMIC DNA]</scope>
    <source>
        <strain>91001 / Biovar Mediaevalis</strain>
    </source>
</reference>
<reference key="3">
    <citation type="journal article" date="2002" name="J. Bacteriol.">
        <title>Genome sequence of Yersinia pestis KIM.</title>
        <authorList>
            <person name="Deng W."/>
            <person name="Burland V."/>
            <person name="Plunkett G. III"/>
            <person name="Boutin A."/>
            <person name="Mayhew G.F."/>
            <person name="Liss P."/>
            <person name="Perna N.T."/>
            <person name="Rose D.J."/>
            <person name="Mau B."/>
            <person name="Zhou S."/>
            <person name="Schwartz D.C."/>
            <person name="Fetherston J.D."/>
            <person name="Lindler L.E."/>
            <person name="Brubaker R.R."/>
            <person name="Plano G.V."/>
            <person name="Straley S.C."/>
            <person name="McDonough K.A."/>
            <person name="Nilles M.L."/>
            <person name="Matson J.S."/>
            <person name="Blattner F.R."/>
            <person name="Perry R.D."/>
        </authorList>
    </citation>
    <scope>NUCLEOTIDE SEQUENCE [LARGE SCALE GENOMIC DNA]</scope>
    <source>
        <strain>KIM10+ / Biovar Mediaevalis</strain>
    </source>
</reference>
<name>NUON_YERPE</name>
<comment type="function">
    <text evidence="1">NDH-1 shuttles electrons from NADH, via FMN and iron-sulfur (Fe-S) centers, to quinones in the respiratory chain. The immediate electron acceptor for the enzyme in this species is believed to be ubiquinone. Couples the redox reaction to proton translocation (for every two electrons transferred, four hydrogen ions are translocated across the cytoplasmic membrane), and thus conserves the redox energy in a proton gradient.</text>
</comment>
<comment type="catalytic activity">
    <reaction evidence="1">
        <text>a quinone + NADH + 5 H(+)(in) = a quinol + NAD(+) + 4 H(+)(out)</text>
        <dbReference type="Rhea" id="RHEA:57888"/>
        <dbReference type="ChEBI" id="CHEBI:15378"/>
        <dbReference type="ChEBI" id="CHEBI:24646"/>
        <dbReference type="ChEBI" id="CHEBI:57540"/>
        <dbReference type="ChEBI" id="CHEBI:57945"/>
        <dbReference type="ChEBI" id="CHEBI:132124"/>
    </reaction>
</comment>
<comment type="subunit">
    <text evidence="1">NDH-1 is composed of 13 different subunits. Subunits NuoA, H, J, K, L, M, N constitute the membrane sector of the complex.</text>
</comment>
<comment type="subcellular location">
    <subcellularLocation>
        <location evidence="1">Cell inner membrane</location>
        <topology evidence="1">Multi-pass membrane protein</topology>
    </subcellularLocation>
</comment>
<comment type="similarity">
    <text evidence="1">Belongs to the complex I subunit 2 family.</text>
</comment>
<feature type="chain" id="PRO_0000249454" description="NADH-quinone oxidoreductase subunit N">
    <location>
        <begin position="1"/>
        <end position="487"/>
    </location>
</feature>
<feature type="transmembrane region" description="Helical" evidence="1">
    <location>
        <begin position="8"/>
        <end position="28"/>
    </location>
</feature>
<feature type="transmembrane region" description="Helical" evidence="1">
    <location>
        <begin position="35"/>
        <end position="55"/>
    </location>
</feature>
<feature type="transmembrane region" description="Helical" evidence="1">
    <location>
        <begin position="78"/>
        <end position="98"/>
    </location>
</feature>
<feature type="transmembrane region" description="Helical" evidence="1">
    <location>
        <begin position="104"/>
        <end position="124"/>
    </location>
</feature>
<feature type="transmembrane region" description="Helical" evidence="1">
    <location>
        <begin position="125"/>
        <end position="145"/>
    </location>
</feature>
<feature type="transmembrane region" description="Helical" evidence="1">
    <location>
        <begin position="159"/>
        <end position="179"/>
    </location>
</feature>
<feature type="transmembrane region" description="Helical" evidence="1">
    <location>
        <begin position="203"/>
        <end position="223"/>
    </location>
</feature>
<feature type="transmembrane region" description="Helical" evidence="1">
    <location>
        <begin position="235"/>
        <end position="255"/>
    </location>
</feature>
<feature type="transmembrane region" description="Helical" evidence="1">
    <location>
        <begin position="271"/>
        <end position="291"/>
    </location>
</feature>
<feature type="transmembrane region" description="Helical" evidence="1">
    <location>
        <begin position="297"/>
        <end position="317"/>
    </location>
</feature>
<feature type="transmembrane region" description="Helical" evidence="1">
    <location>
        <begin position="328"/>
        <end position="348"/>
    </location>
</feature>
<feature type="transmembrane region" description="Helical" evidence="1">
    <location>
        <begin position="376"/>
        <end position="396"/>
    </location>
</feature>
<feature type="transmembrane region" description="Helical" evidence="1">
    <location>
        <begin position="409"/>
        <end position="428"/>
    </location>
</feature>
<feature type="transmembrane region" description="Helical" evidence="1">
    <location>
        <begin position="451"/>
        <end position="471"/>
    </location>
</feature>
<keyword id="KW-0997">Cell inner membrane</keyword>
<keyword id="KW-1003">Cell membrane</keyword>
<keyword id="KW-0472">Membrane</keyword>
<keyword id="KW-0520">NAD</keyword>
<keyword id="KW-0874">Quinone</keyword>
<keyword id="KW-1185">Reference proteome</keyword>
<keyword id="KW-1278">Translocase</keyword>
<keyword id="KW-0812">Transmembrane</keyword>
<keyword id="KW-1133">Transmembrane helix</keyword>
<keyword id="KW-0813">Transport</keyword>
<keyword id="KW-0830">Ubiquinone</keyword>
<accession>Q7CJ84</accession>
<accession>Q74T38</accession>
<protein>
    <recommendedName>
        <fullName evidence="1">NADH-quinone oxidoreductase subunit N</fullName>
        <ecNumber evidence="1">7.1.1.-</ecNumber>
    </recommendedName>
    <alternativeName>
        <fullName evidence="1">NADH dehydrogenase I subunit N</fullName>
    </alternativeName>
    <alternativeName>
        <fullName evidence="1">NDH-1 subunit N</fullName>
    </alternativeName>
</protein>
<dbReference type="EC" id="7.1.1.-" evidence="1"/>
<dbReference type="EMBL" id="AL590842">
    <property type="protein sequence ID" value="CAL21168.1"/>
    <property type="molecule type" value="Genomic_DNA"/>
</dbReference>
<dbReference type="EMBL" id="AE017042">
    <property type="protein sequence ID" value="AAS62559.1"/>
    <property type="molecule type" value="Genomic_DNA"/>
</dbReference>
<dbReference type="EMBL" id="AE009952">
    <property type="protein sequence ID" value="AAM85211.1"/>
    <property type="molecule type" value="Genomic_DNA"/>
</dbReference>
<dbReference type="PIR" id="AE0310">
    <property type="entry name" value="AE0310"/>
</dbReference>
<dbReference type="RefSeq" id="WP_002210268.1">
    <property type="nucleotide sequence ID" value="NZ_WUCM01000021.1"/>
</dbReference>
<dbReference type="RefSeq" id="YP_002347504.1">
    <property type="nucleotide sequence ID" value="NC_003143.1"/>
</dbReference>
<dbReference type="SMR" id="Q7CJ84"/>
<dbReference type="STRING" id="214092.YPO2543"/>
<dbReference type="PaxDb" id="214092-YPO2543"/>
<dbReference type="DNASU" id="1146589"/>
<dbReference type="EnsemblBacteria" id="AAS62559">
    <property type="protein sequence ID" value="AAS62559"/>
    <property type="gene ID" value="YP_2354"/>
</dbReference>
<dbReference type="GeneID" id="57976146"/>
<dbReference type="KEGG" id="ype:YPO2543"/>
<dbReference type="KEGG" id="ypk:y1642"/>
<dbReference type="KEGG" id="ypm:YP_2354"/>
<dbReference type="PATRIC" id="fig|214092.21.peg.2967"/>
<dbReference type="eggNOG" id="COG1007">
    <property type="taxonomic scope" value="Bacteria"/>
</dbReference>
<dbReference type="HOGENOM" id="CLU_007100_1_5_6"/>
<dbReference type="OMA" id="LMFFSEP"/>
<dbReference type="OrthoDB" id="9768329at2"/>
<dbReference type="Proteomes" id="UP000000815">
    <property type="component" value="Chromosome"/>
</dbReference>
<dbReference type="Proteomes" id="UP000001019">
    <property type="component" value="Chromosome"/>
</dbReference>
<dbReference type="Proteomes" id="UP000002490">
    <property type="component" value="Chromosome"/>
</dbReference>
<dbReference type="GO" id="GO:0005886">
    <property type="term" value="C:plasma membrane"/>
    <property type="evidence" value="ECO:0007669"/>
    <property type="project" value="UniProtKB-SubCell"/>
</dbReference>
<dbReference type="GO" id="GO:0008137">
    <property type="term" value="F:NADH dehydrogenase (ubiquinone) activity"/>
    <property type="evidence" value="ECO:0007669"/>
    <property type="project" value="InterPro"/>
</dbReference>
<dbReference type="GO" id="GO:0050136">
    <property type="term" value="F:NADH:ubiquinone reductase (non-electrogenic) activity"/>
    <property type="evidence" value="ECO:0007669"/>
    <property type="project" value="UniProtKB-UniRule"/>
</dbReference>
<dbReference type="GO" id="GO:0048038">
    <property type="term" value="F:quinone binding"/>
    <property type="evidence" value="ECO:0007669"/>
    <property type="project" value="UniProtKB-KW"/>
</dbReference>
<dbReference type="GO" id="GO:0042773">
    <property type="term" value="P:ATP synthesis coupled electron transport"/>
    <property type="evidence" value="ECO:0007669"/>
    <property type="project" value="InterPro"/>
</dbReference>
<dbReference type="HAMAP" id="MF_00445">
    <property type="entry name" value="NDH1_NuoN_1"/>
    <property type="match status" value="1"/>
</dbReference>
<dbReference type="InterPro" id="IPR010096">
    <property type="entry name" value="NADH-Q_OxRdtase_suN/2"/>
</dbReference>
<dbReference type="InterPro" id="IPR001750">
    <property type="entry name" value="ND/Mrp_TM"/>
</dbReference>
<dbReference type="NCBIfam" id="TIGR01770">
    <property type="entry name" value="NDH_I_N"/>
    <property type="match status" value="1"/>
</dbReference>
<dbReference type="NCBIfam" id="NF004439">
    <property type="entry name" value="PRK05777.1-1"/>
    <property type="match status" value="1"/>
</dbReference>
<dbReference type="PANTHER" id="PTHR22773">
    <property type="entry name" value="NADH DEHYDROGENASE"/>
    <property type="match status" value="1"/>
</dbReference>
<dbReference type="Pfam" id="PF00361">
    <property type="entry name" value="Proton_antipo_M"/>
    <property type="match status" value="1"/>
</dbReference>
<organism>
    <name type="scientific">Yersinia pestis</name>
    <dbReference type="NCBI Taxonomy" id="632"/>
    <lineage>
        <taxon>Bacteria</taxon>
        <taxon>Pseudomonadati</taxon>
        <taxon>Pseudomonadota</taxon>
        <taxon>Gammaproteobacteria</taxon>
        <taxon>Enterobacterales</taxon>
        <taxon>Yersiniaceae</taxon>
        <taxon>Yersinia</taxon>
    </lineage>
</organism>
<proteinExistence type="inferred from homology"/>